<reference evidence="5" key="1">
    <citation type="journal article" date="2012" name="Syst. Biol.">
        <title>Peptidomics-based phylogeny and biogeography of Mantophasmatodea (Hexapoda).</title>
        <authorList>
            <person name="Predel R."/>
            <person name="Neupert S."/>
            <person name="Huetteroth W."/>
            <person name="Kahnt J."/>
            <person name="Waidelich D."/>
            <person name="Roth S."/>
        </authorList>
    </citation>
    <scope>PROTEIN SEQUENCE</scope>
    <scope>AMIDATION AT LEU-9</scope>
    <source>
        <tissue evidence="3">Thoracic perisympathetic organs</tissue>
    </source>
</reference>
<sequence length="9" mass="1077">ARSDNFVRL</sequence>
<evidence type="ECO:0000250" key="1">
    <source>
        <dbReference type="UniProtKB" id="P34405"/>
    </source>
</evidence>
<evidence type="ECO:0000255" key="2"/>
<evidence type="ECO:0000269" key="3">
    <source>
    </source>
</evidence>
<evidence type="ECO:0000303" key="4">
    <source>
    </source>
</evidence>
<evidence type="ECO:0000305" key="5"/>
<evidence type="ECO:0000305" key="6">
    <source>
    </source>
</evidence>
<accession>B3A0K2</accession>
<organism>
    <name type="scientific">Pachyphasma brandbergense</name>
    <name type="common">Gladiator</name>
    <name type="synonym">Heel-walker</name>
    <dbReference type="NCBI Taxonomy" id="1041430"/>
    <lineage>
        <taxon>Eukaryota</taxon>
        <taxon>Metazoa</taxon>
        <taxon>Ecdysozoa</taxon>
        <taxon>Arthropoda</taxon>
        <taxon>Hexapoda</taxon>
        <taxon>Insecta</taxon>
        <taxon>Pterygota</taxon>
        <taxon>Neoptera</taxon>
        <taxon>Polyneoptera</taxon>
        <taxon>Mantophasmatodea</taxon>
        <taxon>Mantophasmatidae</taxon>
        <taxon>Pachyphasma</taxon>
    </lineage>
</organism>
<name>FAR8_PACBA</name>
<keyword id="KW-0027">Amidation</keyword>
<keyword id="KW-0903">Direct protein sequencing</keyword>
<keyword id="KW-0527">Neuropeptide</keyword>
<keyword id="KW-0964">Secreted</keyword>
<protein>
    <recommendedName>
        <fullName evidence="4">Extended FMRFamide-8</fullName>
        <shortName evidence="4">FMRFa-8</shortName>
    </recommendedName>
</protein>
<feature type="peptide" id="PRO_0000421535" description="Extended FMRFamide-8" evidence="3">
    <location>
        <begin position="1"/>
        <end position="9"/>
    </location>
</feature>
<feature type="modified residue" description="Leucine amide" evidence="3">
    <location>
        <position position="9"/>
    </location>
</feature>
<feature type="unsure residue" description="L or I" evidence="3">
    <location>
        <position position="9"/>
    </location>
</feature>
<comment type="function">
    <text evidence="1">FMRFamides and FMRFamide-like peptides are neuropeptides.</text>
</comment>
<comment type="subcellular location">
    <subcellularLocation>
        <location evidence="6">Secreted</location>
    </subcellularLocation>
</comment>
<comment type="similarity">
    <text evidence="2">Belongs to the FARP (FMRF amide related peptide) family.</text>
</comment>
<dbReference type="GO" id="GO:0005576">
    <property type="term" value="C:extracellular region"/>
    <property type="evidence" value="ECO:0007669"/>
    <property type="project" value="UniProtKB-SubCell"/>
</dbReference>
<dbReference type="GO" id="GO:0007218">
    <property type="term" value="P:neuropeptide signaling pathway"/>
    <property type="evidence" value="ECO:0007669"/>
    <property type="project" value="UniProtKB-KW"/>
</dbReference>
<proteinExistence type="evidence at protein level"/>